<organism>
    <name type="scientific">Enterococcus faecalis (strain ATCC 700802 / V583)</name>
    <dbReference type="NCBI Taxonomy" id="226185"/>
    <lineage>
        <taxon>Bacteria</taxon>
        <taxon>Bacillati</taxon>
        <taxon>Bacillota</taxon>
        <taxon>Bacilli</taxon>
        <taxon>Lactobacillales</taxon>
        <taxon>Enterococcaceae</taxon>
        <taxon>Enterococcus</taxon>
    </lineage>
</organism>
<accession>Q838K1</accession>
<reference key="1">
    <citation type="journal article" date="2003" name="Science">
        <title>Role of mobile DNA in the evolution of vancomycin-resistant Enterococcus faecalis.</title>
        <authorList>
            <person name="Paulsen I.T."/>
            <person name="Banerjei L."/>
            <person name="Myers G.S.A."/>
            <person name="Nelson K.E."/>
            <person name="Seshadri R."/>
            <person name="Read T.D."/>
            <person name="Fouts D.E."/>
            <person name="Eisen J.A."/>
            <person name="Gill S.R."/>
            <person name="Heidelberg J.F."/>
            <person name="Tettelin H."/>
            <person name="Dodson R.J."/>
            <person name="Umayam L.A."/>
            <person name="Brinkac L.M."/>
            <person name="Beanan M.J."/>
            <person name="Daugherty S.C."/>
            <person name="DeBoy R.T."/>
            <person name="Durkin S.A."/>
            <person name="Kolonay J.F."/>
            <person name="Madupu R."/>
            <person name="Nelson W.C."/>
            <person name="Vamathevan J.J."/>
            <person name="Tran B."/>
            <person name="Upton J."/>
            <person name="Hansen T."/>
            <person name="Shetty J."/>
            <person name="Khouri H.M."/>
            <person name="Utterback T.R."/>
            <person name="Radune D."/>
            <person name="Ketchum K.A."/>
            <person name="Dougherty B.A."/>
            <person name="Fraser C.M."/>
        </authorList>
    </citation>
    <scope>NUCLEOTIDE SEQUENCE [LARGE SCALE GENOMIC DNA]</scope>
    <source>
        <strain>ATCC 700802 / V583</strain>
    </source>
</reference>
<comment type="function">
    <text evidence="1">Converts 2-succinylbenzoate (OSB) to 2-succinylbenzoyl-CoA (OSB-CoA).</text>
</comment>
<comment type="catalytic activity">
    <reaction evidence="1">
        <text>2-succinylbenzoate + ATP + CoA = 2-succinylbenzoyl-CoA + AMP + diphosphate</text>
        <dbReference type="Rhea" id="RHEA:17009"/>
        <dbReference type="ChEBI" id="CHEBI:18325"/>
        <dbReference type="ChEBI" id="CHEBI:30616"/>
        <dbReference type="ChEBI" id="CHEBI:33019"/>
        <dbReference type="ChEBI" id="CHEBI:57287"/>
        <dbReference type="ChEBI" id="CHEBI:57364"/>
        <dbReference type="ChEBI" id="CHEBI:456215"/>
        <dbReference type="EC" id="6.2.1.26"/>
    </reaction>
</comment>
<comment type="pathway">
    <text evidence="1">Quinol/quinone metabolism; 1,4-dihydroxy-2-naphthoate biosynthesis; 1,4-dihydroxy-2-naphthoate from chorismate: step 5/7.</text>
</comment>
<comment type="pathway">
    <text evidence="1">Quinol/quinone metabolism; menaquinone biosynthesis.</text>
</comment>
<comment type="similarity">
    <text evidence="1">Belongs to the ATP-dependent AMP-binding enzyme family. MenE subfamily.</text>
</comment>
<protein>
    <recommendedName>
        <fullName evidence="1">2-succinylbenzoate--CoA ligase</fullName>
        <ecNumber evidence="1">6.2.1.26</ecNumber>
    </recommendedName>
    <alternativeName>
        <fullName evidence="1">o-succinylbenzoyl-CoA synthetase</fullName>
        <shortName evidence="1">OSB-CoA synthetase</shortName>
    </alternativeName>
</protein>
<proteinExistence type="inferred from homology"/>
<name>MENE_ENTFA</name>
<sequence length="485" mass="54289">MTWLNKQVQKRPDHPAFYFQDESWTFLEVQQEVSHWVATYQQVLAPEEKRVALFSKNSKELYFSILALWELGKELLFLNTHLTLAELTFQLKDAQVKTIIGAPETQALLEEISFVDVQPMIKKQHSLSHQEFQQPSDLESVASIMYTSGTTGQPKGVLQRFKNHLASARGTQENMGITAEDCWLCAVPLFHISGLSIVVRQLVLGCSIRLYDKFDEQQVTQDLQEGRGTVISVVATMLQQLLSVYPEAGYSASFKGMLLGGGPIAPDKLAQCEEKGIPVIQSYGMTETCSQVVALKFEDAALKIGSAGQPLKDMQIKIVDELGQEQPEKQVGEILLKGPNVVSGYLNQRQPEKWTADGWFKTGDMGYLDAQSYLYLVSRLSELIISGGENIYPTEVEQVLQAITGIKAAAVVGEPDAQWGAVPVAYVISDQEITLAQIQDQCSRKLAKYKRPKRIYFCHSFPQTASGKIAKHRFMTEEREAFLIR</sequence>
<evidence type="ECO:0000255" key="1">
    <source>
        <dbReference type="HAMAP-Rule" id="MF_00731"/>
    </source>
</evidence>
<feature type="chain" id="PRO_0000193160" description="2-succinylbenzoate--CoA ligase">
    <location>
        <begin position="1"/>
        <end position="485"/>
    </location>
</feature>
<gene>
    <name evidence="1" type="primary">menE</name>
    <name type="ordered locus">EF_0446</name>
</gene>
<keyword id="KW-0067">ATP-binding</keyword>
<keyword id="KW-0436">Ligase</keyword>
<keyword id="KW-0474">Menaquinone biosynthesis</keyword>
<keyword id="KW-0547">Nucleotide-binding</keyword>
<keyword id="KW-1185">Reference proteome</keyword>
<dbReference type="EC" id="6.2.1.26" evidence="1"/>
<dbReference type="EMBL" id="AE016830">
    <property type="protein sequence ID" value="AAO80301.1"/>
    <property type="molecule type" value="Genomic_DNA"/>
</dbReference>
<dbReference type="RefSeq" id="NP_814230.1">
    <property type="nucleotide sequence ID" value="NC_004668.1"/>
</dbReference>
<dbReference type="RefSeq" id="WP_002387679.1">
    <property type="nucleotide sequence ID" value="NZ_KE136524.1"/>
</dbReference>
<dbReference type="SMR" id="Q838K1"/>
<dbReference type="STRING" id="226185.EF_0446"/>
<dbReference type="EnsemblBacteria" id="AAO80301">
    <property type="protein sequence ID" value="AAO80301"/>
    <property type="gene ID" value="EF_0446"/>
</dbReference>
<dbReference type="KEGG" id="efa:EF0446"/>
<dbReference type="PATRIC" id="fig|226185.9.peg.411"/>
<dbReference type="eggNOG" id="COG0318">
    <property type="taxonomic scope" value="Bacteria"/>
</dbReference>
<dbReference type="HOGENOM" id="CLU_000022_59_0_9"/>
<dbReference type="BioCyc" id="MetaCyc:MONOMER-13858"/>
<dbReference type="UniPathway" id="UPA00079"/>
<dbReference type="UniPathway" id="UPA01057">
    <property type="reaction ID" value="UER00166"/>
</dbReference>
<dbReference type="Proteomes" id="UP000001415">
    <property type="component" value="Chromosome"/>
</dbReference>
<dbReference type="GO" id="GO:0005524">
    <property type="term" value="F:ATP binding"/>
    <property type="evidence" value="ECO:0007669"/>
    <property type="project" value="UniProtKB-KW"/>
</dbReference>
<dbReference type="GO" id="GO:0031956">
    <property type="term" value="F:medium-chain fatty acid-CoA ligase activity"/>
    <property type="evidence" value="ECO:0007669"/>
    <property type="project" value="TreeGrafter"/>
</dbReference>
<dbReference type="GO" id="GO:0008756">
    <property type="term" value="F:o-succinylbenzoate-CoA ligase activity"/>
    <property type="evidence" value="ECO:0007669"/>
    <property type="project" value="UniProtKB-UniRule"/>
</dbReference>
<dbReference type="GO" id="GO:0006631">
    <property type="term" value="P:fatty acid metabolic process"/>
    <property type="evidence" value="ECO:0007669"/>
    <property type="project" value="TreeGrafter"/>
</dbReference>
<dbReference type="GO" id="GO:0009234">
    <property type="term" value="P:menaquinone biosynthetic process"/>
    <property type="evidence" value="ECO:0007669"/>
    <property type="project" value="UniProtKB-UniRule"/>
</dbReference>
<dbReference type="CDD" id="cd05912">
    <property type="entry name" value="OSB_CoA_lg"/>
    <property type="match status" value="1"/>
</dbReference>
<dbReference type="Gene3D" id="3.30.300.30">
    <property type="match status" value="1"/>
</dbReference>
<dbReference type="Gene3D" id="3.40.50.12780">
    <property type="entry name" value="N-terminal domain of ligase-like"/>
    <property type="match status" value="1"/>
</dbReference>
<dbReference type="HAMAP" id="MF_00731">
    <property type="entry name" value="MenE"/>
    <property type="match status" value="1"/>
</dbReference>
<dbReference type="InterPro" id="IPR025110">
    <property type="entry name" value="AMP-bd_C"/>
</dbReference>
<dbReference type="InterPro" id="IPR045851">
    <property type="entry name" value="AMP-bd_C_sf"/>
</dbReference>
<dbReference type="InterPro" id="IPR020845">
    <property type="entry name" value="AMP-binding_CS"/>
</dbReference>
<dbReference type="InterPro" id="IPR000873">
    <property type="entry name" value="AMP-dep_synth/lig_dom"/>
</dbReference>
<dbReference type="InterPro" id="IPR042099">
    <property type="entry name" value="ANL_N_sf"/>
</dbReference>
<dbReference type="InterPro" id="IPR010192">
    <property type="entry name" value="MenE"/>
</dbReference>
<dbReference type="NCBIfam" id="TIGR01923">
    <property type="entry name" value="menE"/>
    <property type="match status" value="1"/>
</dbReference>
<dbReference type="NCBIfam" id="NF002966">
    <property type="entry name" value="PRK03640.1"/>
    <property type="match status" value="1"/>
</dbReference>
<dbReference type="PANTHER" id="PTHR43201">
    <property type="entry name" value="ACYL-COA SYNTHETASE"/>
    <property type="match status" value="1"/>
</dbReference>
<dbReference type="PANTHER" id="PTHR43201:SF5">
    <property type="entry name" value="MEDIUM-CHAIN ACYL-COA LIGASE ACSF2, MITOCHONDRIAL"/>
    <property type="match status" value="1"/>
</dbReference>
<dbReference type="Pfam" id="PF00501">
    <property type="entry name" value="AMP-binding"/>
    <property type="match status" value="1"/>
</dbReference>
<dbReference type="Pfam" id="PF13193">
    <property type="entry name" value="AMP-binding_C"/>
    <property type="match status" value="1"/>
</dbReference>
<dbReference type="SUPFAM" id="SSF56801">
    <property type="entry name" value="Acetyl-CoA synthetase-like"/>
    <property type="match status" value="1"/>
</dbReference>
<dbReference type="PROSITE" id="PS00455">
    <property type="entry name" value="AMP_BINDING"/>
    <property type="match status" value="1"/>
</dbReference>